<keyword id="KW-0007">Acetylation</keyword>
<keyword id="KW-0175">Coiled coil</keyword>
<keyword id="KW-0539">Nucleus</keyword>
<keyword id="KW-0597">Phosphoprotein</keyword>
<keyword id="KW-1185">Reference proteome</keyword>
<accession>Q17QX9</accession>
<feature type="initiator methionine" description="Removed" evidence="2">
    <location>
        <position position="1"/>
    </location>
</feature>
<feature type="chain" id="PRO_0000313646" description="Spliceosome-associated protein CWC27 homolog">
    <location>
        <begin position="2"/>
        <end position="473"/>
    </location>
</feature>
<feature type="domain" description="PPIase cyclophilin-type" evidence="4">
    <location>
        <begin position="11"/>
        <end position="166"/>
    </location>
</feature>
<feature type="region of interest" description="Disordered" evidence="5">
    <location>
        <begin position="178"/>
        <end position="197"/>
    </location>
</feature>
<feature type="region of interest" description="Disordered" evidence="5">
    <location>
        <begin position="203"/>
        <end position="383"/>
    </location>
</feature>
<feature type="region of interest" description="Disordered" evidence="5">
    <location>
        <begin position="401"/>
        <end position="473"/>
    </location>
</feature>
<feature type="coiled-coil region" evidence="3">
    <location>
        <begin position="206"/>
        <end position="230"/>
    </location>
</feature>
<feature type="coiled-coil region" evidence="3">
    <location>
        <begin position="311"/>
        <end position="378"/>
    </location>
</feature>
<feature type="short sequence motif" description="Cell attachment site" evidence="3">
    <location>
        <begin position="252"/>
        <end position="254"/>
    </location>
</feature>
<feature type="compositionally biased region" description="Basic and acidic residues" evidence="5">
    <location>
        <begin position="178"/>
        <end position="193"/>
    </location>
</feature>
<feature type="compositionally biased region" description="Basic and acidic residues" evidence="5">
    <location>
        <begin position="231"/>
        <end position="241"/>
    </location>
</feature>
<feature type="compositionally biased region" description="Acidic residues" evidence="5">
    <location>
        <begin position="256"/>
        <end position="266"/>
    </location>
</feature>
<feature type="compositionally biased region" description="Basic and acidic residues" evidence="5">
    <location>
        <begin position="267"/>
        <end position="348"/>
    </location>
</feature>
<feature type="compositionally biased region" description="Basic and acidic residues" evidence="5">
    <location>
        <begin position="360"/>
        <end position="372"/>
    </location>
</feature>
<feature type="compositionally biased region" description="Acidic residues" evidence="5">
    <location>
        <begin position="405"/>
        <end position="419"/>
    </location>
</feature>
<feature type="compositionally biased region" description="Basic and acidic residues" evidence="5">
    <location>
        <begin position="426"/>
        <end position="438"/>
    </location>
</feature>
<feature type="compositionally biased region" description="Basic and acidic residues" evidence="5">
    <location>
        <begin position="458"/>
        <end position="473"/>
    </location>
</feature>
<feature type="modified residue" description="N-acetylserine" evidence="2">
    <location>
        <position position="2"/>
    </location>
</feature>
<feature type="modified residue" description="Phosphoserine" evidence="1">
    <location>
        <position position="347"/>
    </location>
</feature>
<protein>
    <recommendedName>
        <fullName evidence="6">Spliceosome-associated protein CWC27 homolog</fullName>
    </recommendedName>
    <alternativeName>
        <fullName evidence="2">Probable inactive peptidyl-prolyl cis-trans isomerase CWC27 homolog</fullName>
        <shortName evidence="2">PPIase CWC27</shortName>
    </alternativeName>
</protein>
<name>CWC27_BOVIN</name>
<proteinExistence type="evidence at transcript level"/>
<evidence type="ECO:0000250" key="1">
    <source>
        <dbReference type="UniProtKB" id="Q5XIB2"/>
    </source>
</evidence>
<evidence type="ECO:0000250" key="2">
    <source>
        <dbReference type="UniProtKB" id="Q6UX04"/>
    </source>
</evidence>
<evidence type="ECO:0000255" key="3"/>
<evidence type="ECO:0000255" key="4">
    <source>
        <dbReference type="PROSITE-ProRule" id="PRU00156"/>
    </source>
</evidence>
<evidence type="ECO:0000256" key="5">
    <source>
        <dbReference type="SAM" id="MobiDB-lite"/>
    </source>
</evidence>
<evidence type="ECO:0000305" key="6"/>
<dbReference type="EMBL" id="BC118124">
    <property type="protein sequence ID" value="AAI18125.1"/>
    <property type="molecule type" value="mRNA"/>
</dbReference>
<dbReference type="RefSeq" id="NP_001068628.1">
    <property type="nucleotide sequence ID" value="NM_001075160.2"/>
</dbReference>
<dbReference type="SMR" id="Q17QX9"/>
<dbReference type="FunCoup" id="Q17QX9">
    <property type="interactions" value="3967"/>
</dbReference>
<dbReference type="STRING" id="9913.ENSBTAP00000000040"/>
<dbReference type="PaxDb" id="9913-ENSBTAP00000000040"/>
<dbReference type="GeneID" id="504397"/>
<dbReference type="KEGG" id="bta:504397"/>
<dbReference type="CTD" id="10283"/>
<dbReference type="eggNOG" id="KOG0865">
    <property type="taxonomic scope" value="Eukaryota"/>
</dbReference>
<dbReference type="eggNOG" id="KOG0885">
    <property type="taxonomic scope" value="Eukaryota"/>
</dbReference>
<dbReference type="InParanoid" id="Q17QX9"/>
<dbReference type="OrthoDB" id="442970at2759"/>
<dbReference type="Proteomes" id="UP000009136">
    <property type="component" value="Unplaced"/>
</dbReference>
<dbReference type="GO" id="GO:0071013">
    <property type="term" value="C:catalytic step 2 spliceosome"/>
    <property type="evidence" value="ECO:0000318"/>
    <property type="project" value="GO_Central"/>
</dbReference>
<dbReference type="GO" id="GO:0071005">
    <property type="term" value="C:U2-type precatalytic spliceosome"/>
    <property type="evidence" value="ECO:0000250"/>
    <property type="project" value="UniProtKB"/>
</dbReference>
<dbReference type="GO" id="GO:0003755">
    <property type="term" value="F:peptidyl-prolyl cis-trans isomerase activity"/>
    <property type="evidence" value="ECO:0007669"/>
    <property type="project" value="InterPro"/>
</dbReference>
<dbReference type="GO" id="GO:0006457">
    <property type="term" value="P:protein folding"/>
    <property type="evidence" value="ECO:0000318"/>
    <property type="project" value="GO_Central"/>
</dbReference>
<dbReference type="CDD" id="cd22288">
    <property type="entry name" value="CWC27_CTD"/>
    <property type="match status" value="1"/>
</dbReference>
<dbReference type="CDD" id="cd01925">
    <property type="entry name" value="cyclophilin_CeCYP16-like"/>
    <property type="match status" value="1"/>
</dbReference>
<dbReference type="FunFam" id="2.40.100.10:FF:000007">
    <property type="entry name" value="Peptidyl-prolyl cis-trans isomerase CWC27 homolog"/>
    <property type="match status" value="1"/>
</dbReference>
<dbReference type="Gene3D" id="2.40.100.10">
    <property type="entry name" value="Cyclophilin-like"/>
    <property type="match status" value="1"/>
</dbReference>
<dbReference type="InterPro" id="IPR029000">
    <property type="entry name" value="Cyclophilin-like_dom_sf"/>
</dbReference>
<dbReference type="InterPro" id="IPR020892">
    <property type="entry name" value="Cyclophilin-type_PPIase_CS"/>
</dbReference>
<dbReference type="InterPro" id="IPR002130">
    <property type="entry name" value="Cyclophilin-type_PPIase_dom"/>
</dbReference>
<dbReference type="InterPro" id="IPR044666">
    <property type="entry name" value="Cyclophilin_A-like"/>
</dbReference>
<dbReference type="PANTHER" id="PTHR45625">
    <property type="entry name" value="PEPTIDYL-PROLYL CIS-TRANS ISOMERASE-RELATED"/>
    <property type="match status" value="1"/>
</dbReference>
<dbReference type="PANTHER" id="PTHR45625:SF6">
    <property type="entry name" value="SPLICEOSOME-ASSOCIATED PROTEIN CWC27 HOMOLOG"/>
    <property type="match status" value="1"/>
</dbReference>
<dbReference type="Pfam" id="PF00160">
    <property type="entry name" value="Pro_isomerase"/>
    <property type="match status" value="1"/>
</dbReference>
<dbReference type="PRINTS" id="PR00153">
    <property type="entry name" value="CSAPPISMRASE"/>
</dbReference>
<dbReference type="SUPFAM" id="SSF50891">
    <property type="entry name" value="Cyclophilin-like"/>
    <property type="match status" value="1"/>
</dbReference>
<dbReference type="PROSITE" id="PS00170">
    <property type="entry name" value="CSA_PPIASE_1"/>
    <property type="match status" value="1"/>
</dbReference>
<dbReference type="PROSITE" id="PS50072">
    <property type="entry name" value="CSA_PPIASE_2"/>
    <property type="match status" value="1"/>
</dbReference>
<sequence length="473" mass="54063">MSNIYIQEPPTNGKVLLKTTAGDIDIELWSKEAPKACRNFIQLCLEAYYDNTIFHRVVPGFIVQGGDPTGTGTGGESIYGVPFKDEFHSRLRFNRRGLVAMANAGPHDNGSQFFFTLGRADELNNKHTIFGKVTGDTVYNMLRLTEVDIDDEERPRNSHKIRSCEVLFNPFDDIIPREIKKPKKEKPEEEVKKLKPKGTKNFSLLSFGEEAEEEEEEVNRVSQSMKGKSKSSHDLLKDDPHLSSVPAVESERGDAAEDSDDDGEYEGAEHDEYVDGDEKNQMRERIAKKLKKDTSENVKRAGEGEVEKKPVSRSEELRKEARQLKRELLAAKQKKAENSAIQAEKRSEEEEAAPDGAVAEYRREKQKYEALRKQQAKTGTSREDQTLALLNQFKSKLTQAIAETPENDISETEVEDDEGWMSHVLQFEDKSRKVKDASMQDSDTFEIYDPRNPVNKRRREESKKLMREKKERR</sequence>
<organism>
    <name type="scientific">Bos taurus</name>
    <name type="common">Bovine</name>
    <dbReference type="NCBI Taxonomy" id="9913"/>
    <lineage>
        <taxon>Eukaryota</taxon>
        <taxon>Metazoa</taxon>
        <taxon>Chordata</taxon>
        <taxon>Craniata</taxon>
        <taxon>Vertebrata</taxon>
        <taxon>Euteleostomi</taxon>
        <taxon>Mammalia</taxon>
        <taxon>Eutheria</taxon>
        <taxon>Laurasiatheria</taxon>
        <taxon>Artiodactyla</taxon>
        <taxon>Ruminantia</taxon>
        <taxon>Pecora</taxon>
        <taxon>Bovidae</taxon>
        <taxon>Bovinae</taxon>
        <taxon>Bos</taxon>
    </lineage>
</organism>
<comment type="function">
    <text evidence="2">As part of the spliceosome, plays a role in pre-mRNA splicing. Probable inactive PPIase with no peptidyl-prolyl cis-trans isomerase activity. As a component of the minor spliceosome, involved in the splicing of U12-type introns in pre-mRNAs (By similarity).</text>
</comment>
<comment type="subunit">
    <text evidence="2">Part of the activated spliceosome B/catalytic step 1 spliceosome, one of the forms of the spliceosome which has a well-formed active site but still cannot catalyze the branching reaction and is composed at least of 52 proteins, the U2, U5 and U6 snRNAs and the pre-mRNA. Recruited during early steps of activated spliceosome B maturation, it is probably one of the first proteins released from this complex as he matures to the spliceosome C complex. Component of the minor spliceosome, which splices U12-type introns (By similarity).</text>
</comment>
<comment type="subcellular location">
    <subcellularLocation>
        <location evidence="2">Nucleus</location>
    </subcellularLocation>
</comment>
<comment type="similarity">
    <text evidence="6">Belongs to the cyclophilin-type PPIase family.</text>
</comment>
<comment type="caution">
    <text evidence="2">Despite the fact that it belongs to the cyclophilin-type PPIase family, it has probably no peptidyl-prolyl cis-trans isomerase activity.</text>
</comment>
<reference key="1">
    <citation type="submission" date="2006-06" db="EMBL/GenBank/DDBJ databases">
        <authorList>
            <consortium name="NIH - Mammalian Gene Collection (MGC) project"/>
        </authorList>
    </citation>
    <scope>NUCLEOTIDE SEQUENCE [LARGE SCALE MRNA]</scope>
    <source>
        <strain>Hereford</strain>
        <tissue>Thymus</tissue>
    </source>
</reference>
<gene>
    <name evidence="2" type="primary">CWC27</name>
    <name type="synonym">SDCCAG10</name>
</gene>